<proteinExistence type="inferred from homology"/>
<name>RL34_CHRVO</name>
<accession>Q7NPQ5</accession>
<organism>
    <name type="scientific">Chromobacterium violaceum (strain ATCC 12472 / DSM 30191 / JCM 1249 / CCUG 213 / NBRC 12614 / NCIMB 9131 / NCTC 9757 / MK)</name>
    <dbReference type="NCBI Taxonomy" id="243365"/>
    <lineage>
        <taxon>Bacteria</taxon>
        <taxon>Pseudomonadati</taxon>
        <taxon>Pseudomonadota</taxon>
        <taxon>Betaproteobacteria</taxon>
        <taxon>Neisseriales</taxon>
        <taxon>Chromobacteriaceae</taxon>
        <taxon>Chromobacterium</taxon>
    </lineage>
</organism>
<keyword id="KW-1185">Reference proteome</keyword>
<keyword id="KW-0687">Ribonucleoprotein</keyword>
<keyword id="KW-0689">Ribosomal protein</keyword>
<evidence type="ECO:0000255" key="1">
    <source>
        <dbReference type="HAMAP-Rule" id="MF_00391"/>
    </source>
</evidence>
<evidence type="ECO:0000305" key="2"/>
<gene>
    <name evidence="1" type="primary">rpmH</name>
    <name type="ordered locus">CV_4407</name>
</gene>
<dbReference type="EMBL" id="AE016825">
    <property type="protein sequence ID" value="AAQ64071.1"/>
    <property type="molecule type" value="Genomic_DNA"/>
</dbReference>
<dbReference type="RefSeq" id="WP_011137953.1">
    <property type="nucleotide sequence ID" value="NC_005085.1"/>
</dbReference>
<dbReference type="SMR" id="Q7NPQ5"/>
<dbReference type="STRING" id="243365.CV_4407"/>
<dbReference type="GeneID" id="66366113"/>
<dbReference type="KEGG" id="cvi:CV_4407"/>
<dbReference type="eggNOG" id="COG0230">
    <property type="taxonomic scope" value="Bacteria"/>
</dbReference>
<dbReference type="HOGENOM" id="CLU_129938_2_0_4"/>
<dbReference type="Proteomes" id="UP000001424">
    <property type="component" value="Chromosome"/>
</dbReference>
<dbReference type="GO" id="GO:1990904">
    <property type="term" value="C:ribonucleoprotein complex"/>
    <property type="evidence" value="ECO:0007669"/>
    <property type="project" value="UniProtKB-KW"/>
</dbReference>
<dbReference type="GO" id="GO:0005840">
    <property type="term" value="C:ribosome"/>
    <property type="evidence" value="ECO:0007669"/>
    <property type="project" value="UniProtKB-KW"/>
</dbReference>
<dbReference type="GO" id="GO:0003735">
    <property type="term" value="F:structural constituent of ribosome"/>
    <property type="evidence" value="ECO:0007669"/>
    <property type="project" value="InterPro"/>
</dbReference>
<dbReference type="GO" id="GO:0006412">
    <property type="term" value="P:translation"/>
    <property type="evidence" value="ECO:0007669"/>
    <property type="project" value="UniProtKB-UniRule"/>
</dbReference>
<dbReference type="FunFam" id="1.10.287.3980:FF:000001">
    <property type="entry name" value="Mitochondrial ribosomal protein L34"/>
    <property type="match status" value="1"/>
</dbReference>
<dbReference type="Gene3D" id="1.10.287.3980">
    <property type="match status" value="1"/>
</dbReference>
<dbReference type="HAMAP" id="MF_00391">
    <property type="entry name" value="Ribosomal_bL34"/>
    <property type="match status" value="1"/>
</dbReference>
<dbReference type="InterPro" id="IPR000271">
    <property type="entry name" value="Ribosomal_bL34"/>
</dbReference>
<dbReference type="InterPro" id="IPR020939">
    <property type="entry name" value="Ribosomal_bL34_CS"/>
</dbReference>
<dbReference type="NCBIfam" id="TIGR01030">
    <property type="entry name" value="rpmH_bact"/>
    <property type="match status" value="1"/>
</dbReference>
<dbReference type="PANTHER" id="PTHR14503:SF4">
    <property type="entry name" value="LARGE RIBOSOMAL SUBUNIT PROTEIN BL34M"/>
    <property type="match status" value="1"/>
</dbReference>
<dbReference type="PANTHER" id="PTHR14503">
    <property type="entry name" value="MITOCHONDRIAL RIBOSOMAL PROTEIN 34 FAMILY MEMBER"/>
    <property type="match status" value="1"/>
</dbReference>
<dbReference type="Pfam" id="PF00468">
    <property type="entry name" value="Ribosomal_L34"/>
    <property type="match status" value="1"/>
</dbReference>
<dbReference type="PROSITE" id="PS00784">
    <property type="entry name" value="RIBOSOMAL_L34"/>
    <property type="match status" value="1"/>
</dbReference>
<protein>
    <recommendedName>
        <fullName evidence="1">Large ribosomal subunit protein bL34</fullName>
    </recommendedName>
    <alternativeName>
        <fullName evidence="2">50S ribosomal protein L34</fullName>
    </alternativeName>
</protein>
<comment type="similarity">
    <text evidence="1">Belongs to the bacterial ribosomal protein bL34 family.</text>
</comment>
<sequence>MKRTYQPSTTRRKRTHGFLVRMKTRGGRAVIAARRAKGRKRLAV</sequence>
<feature type="chain" id="PRO_0000187368" description="Large ribosomal subunit protein bL34">
    <location>
        <begin position="1"/>
        <end position="44"/>
    </location>
</feature>
<reference key="1">
    <citation type="journal article" date="2003" name="Proc. Natl. Acad. Sci. U.S.A.">
        <title>The complete genome sequence of Chromobacterium violaceum reveals remarkable and exploitable bacterial adaptability.</title>
        <authorList>
            <person name="Vasconcelos A.T.R."/>
            <person name="de Almeida D.F."/>
            <person name="Hungria M."/>
            <person name="Guimaraes C.T."/>
            <person name="Antonio R.V."/>
            <person name="Almeida F.C."/>
            <person name="de Almeida L.G.P."/>
            <person name="de Almeida R."/>
            <person name="Alves-Gomes J.A."/>
            <person name="Andrade E.M."/>
            <person name="Araripe J."/>
            <person name="de Araujo M.F.F."/>
            <person name="Astolfi-Filho S."/>
            <person name="Azevedo V."/>
            <person name="Baptista A.J."/>
            <person name="Bataus L.A.M."/>
            <person name="Batista J.S."/>
            <person name="Belo A."/>
            <person name="van den Berg C."/>
            <person name="Bogo M."/>
            <person name="Bonatto S."/>
            <person name="Bordignon J."/>
            <person name="Brigido M.M."/>
            <person name="Brito C.A."/>
            <person name="Brocchi M."/>
            <person name="Burity H.A."/>
            <person name="Camargo A.A."/>
            <person name="Cardoso D.D.P."/>
            <person name="Carneiro N.P."/>
            <person name="Carraro D.M."/>
            <person name="Carvalho C.M.B."/>
            <person name="Cascardo J.C.M."/>
            <person name="Cavada B.S."/>
            <person name="Chueire L.M.O."/>
            <person name="Creczynski-Pasa T.B."/>
            <person name="Cunha-Junior N.C."/>
            <person name="Fagundes N."/>
            <person name="Falcao C.L."/>
            <person name="Fantinatti F."/>
            <person name="Farias I.P."/>
            <person name="Felipe M.S.S."/>
            <person name="Ferrari L.P."/>
            <person name="Ferro J.A."/>
            <person name="Ferro M.I.T."/>
            <person name="Franco G.R."/>
            <person name="Freitas N.S.A."/>
            <person name="Furlan L.R."/>
            <person name="Gazzinelli R.T."/>
            <person name="Gomes E.A."/>
            <person name="Goncalves P.R."/>
            <person name="Grangeiro T.B."/>
            <person name="Grattapaglia D."/>
            <person name="Grisard E.C."/>
            <person name="Hanna E.S."/>
            <person name="Jardim S.N."/>
            <person name="Laurino J."/>
            <person name="Leoi L.C.T."/>
            <person name="Lima L.F.A."/>
            <person name="Loureiro M.F."/>
            <person name="Lyra M.C.C.P."/>
            <person name="Madeira H.M.F."/>
            <person name="Manfio G.P."/>
            <person name="Maranhao A.Q."/>
            <person name="Martins W.S."/>
            <person name="di Mauro S.M.Z."/>
            <person name="de Medeiros S.R.B."/>
            <person name="Meissner R.V."/>
            <person name="Moreira M.A.M."/>
            <person name="Nascimento F.F."/>
            <person name="Nicolas M.F."/>
            <person name="Oliveira J.G."/>
            <person name="Oliveira S.C."/>
            <person name="Paixao R.F.C."/>
            <person name="Parente J.A."/>
            <person name="Pedrosa F.O."/>
            <person name="Pena S.D.J."/>
            <person name="Pereira J.O."/>
            <person name="Pereira M."/>
            <person name="Pinto L.S.R.C."/>
            <person name="Pinto L.S."/>
            <person name="Porto J.I.R."/>
            <person name="Potrich D.P."/>
            <person name="Ramalho-Neto C.E."/>
            <person name="Reis A.M.M."/>
            <person name="Rigo L.U."/>
            <person name="Rondinelli E."/>
            <person name="Santos E.B.P."/>
            <person name="Santos F.R."/>
            <person name="Schneider M.P.C."/>
            <person name="Seuanez H.N."/>
            <person name="Silva A.M.R."/>
            <person name="da Silva A.L.C."/>
            <person name="Silva D.W."/>
            <person name="Silva R."/>
            <person name="Simoes I.C."/>
            <person name="Simon D."/>
            <person name="Soares C.M.A."/>
            <person name="Soares R.B.A."/>
            <person name="Souza E.M."/>
            <person name="Souza K.R.L."/>
            <person name="Souza R.C."/>
            <person name="Steffens M.B.R."/>
            <person name="Steindel M."/>
            <person name="Teixeira S.R."/>
            <person name="Urmenyi T."/>
            <person name="Vettore A."/>
            <person name="Wassem R."/>
            <person name="Zaha A."/>
            <person name="Simpson A.J.G."/>
        </authorList>
    </citation>
    <scope>NUCLEOTIDE SEQUENCE [LARGE SCALE GENOMIC DNA]</scope>
    <source>
        <strain>ATCC 12472 / DSM 30191 / JCM 1249 / CCUG 213 / NBRC 12614 / NCIMB 9131 / NCTC 9757 / MK</strain>
    </source>
</reference>